<protein>
    <recommendedName>
        <fullName evidence="1">Transcription termination/antitermination protein NusG</fullName>
    </recommendedName>
</protein>
<accession>P43916</accession>
<comment type="function">
    <text evidence="1">Participates in transcription elongation, termination and antitermination.</text>
</comment>
<comment type="similarity">
    <text evidence="1">Belongs to the NusG family.</text>
</comment>
<keyword id="KW-1185">Reference proteome</keyword>
<keyword id="KW-0804">Transcription</keyword>
<keyword id="KW-0889">Transcription antitermination</keyword>
<keyword id="KW-0805">Transcription regulation</keyword>
<keyword id="KW-0806">Transcription termination</keyword>
<feature type="chain" id="PRO_0000113929" description="Transcription termination/antitermination protein NusG">
    <location>
        <begin position="1"/>
        <end position="185"/>
    </location>
</feature>
<feature type="domain" description="KOW" evidence="1">
    <location>
        <begin position="133"/>
        <end position="161"/>
    </location>
</feature>
<organism>
    <name type="scientific">Haemophilus influenzae (strain ATCC 51907 / DSM 11121 / KW20 / Rd)</name>
    <dbReference type="NCBI Taxonomy" id="71421"/>
    <lineage>
        <taxon>Bacteria</taxon>
        <taxon>Pseudomonadati</taxon>
        <taxon>Pseudomonadota</taxon>
        <taxon>Gammaproteobacteria</taxon>
        <taxon>Pasteurellales</taxon>
        <taxon>Pasteurellaceae</taxon>
        <taxon>Haemophilus</taxon>
    </lineage>
</organism>
<name>NUSG_HAEIN</name>
<proteinExistence type="inferred from homology"/>
<sequence length="185" mass="21381">MTEETTVSKKRWYVLQAFSGFESRVALTLREYIKQQQMEDQFGEVLVPTEEVVENVAGKRRKSERKFFPGYVLVEMEMNDETWHLVKSVPRVMGFIGGTPDKPAPISKREADTILNRLEQNTDKPRHRNEYHPGEEVRVTEGPFADFNGTVEEVDYEKGRLKVSVSMFGRATPVELEFGQVEKIH</sequence>
<dbReference type="EMBL" id="L42023">
    <property type="protein sequence ID" value="AAC22374.1"/>
    <property type="molecule type" value="Genomic_DNA"/>
</dbReference>
<dbReference type="PIR" id="G64088">
    <property type="entry name" value="G64088"/>
</dbReference>
<dbReference type="RefSeq" id="NP_438875.1">
    <property type="nucleotide sequence ID" value="NC_000907.1"/>
</dbReference>
<dbReference type="SMR" id="P43916"/>
<dbReference type="STRING" id="71421.HI_0717"/>
<dbReference type="EnsemblBacteria" id="AAC22374">
    <property type="protein sequence ID" value="AAC22374"/>
    <property type="gene ID" value="HI_0717"/>
</dbReference>
<dbReference type="KEGG" id="hin:HI_0717"/>
<dbReference type="PATRIC" id="fig|71421.8.peg.749"/>
<dbReference type="eggNOG" id="COG0250">
    <property type="taxonomic scope" value="Bacteria"/>
</dbReference>
<dbReference type="HOGENOM" id="CLU_067287_1_0_6"/>
<dbReference type="OrthoDB" id="9809075at2"/>
<dbReference type="PhylomeDB" id="P43916"/>
<dbReference type="BioCyc" id="HINF71421:G1GJ1-751-MONOMER"/>
<dbReference type="Proteomes" id="UP000000579">
    <property type="component" value="Chromosome"/>
</dbReference>
<dbReference type="GO" id="GO:0005829">
    <property type="term" value="C:cytosol"/>
    <property type="evidence" value="ECO:0000318"/>
    <property type="project" value="GO_Central"/>
</dbReference>
<dbReference type="GO" id="GO:0006353">
    <property type="term" value="P:DNA-templated transcription termination"/>
    <property type="evidence" value="ECO:0007669"/>
    <property type="project" value="UniProtKB-UniRule"/>
</dbReference>
<dbReference type="GO" id="GO:0032784">
    <property type="term" value="P:regulation of DNA-templated transcription elongation"/>
    <property type="evidence" value="ECO:0007669"/>
    <property type="project" value="InterPro"/>
</dbReference>
<dbReference type="GO" id="GO:0031564">
    <property type="term" value="P:transcription antitermination"/>
    <property type="evidence" value="ECO:0007669"/>
    <property type="project" value="UniProtKB-UniRule"/>
</dbReference>
<dbReference type="GO" id="GO:0140673">
    <property type="term" value="P:transcription elongation-coupled chromatin remodeling"/>
    <property type="evidence" value="ECO:0007669"/>
    <property type="project" value="InterPro"/>
</dbReference>
<dbReference type="CDD" id="cd06091">
    <property type="entry name" value="KOW_NusG"/>
    <property type="match status" value="1"/>
</dbReference>
<dbReference type="CDD" id="cd09891">
    <property type="entry name" value="NGN_Bact_1"/>
    <property type="match status" value="1"/>
</dbReference>
<dbReference type="FunFam" id="2.30.30.30:FF:000002">
    <property type="entry name" value="Transcription termination/antitermination factor NusG"/>
    <property type="match status" value="1"/>
</dbReference>
<dbReference type="FunFam" id="3.30.70.940:FF:000001">
    <property type="entry name" value="Transcription termination/antitermination protein NusG"/>
    <property type="match status" value="1"/>
</dbReference>
<dbReference type="Gene3D" id="2.30.30.30">
    <property type="match status" value="1"/>
</dbReference>
<dbReference type="Gene3D" id="3.30.70.940">
    <property type="entry name" value="NusG, N-terminal domain"/>
    <property type="match status" value="1"/>
</dbReference>
<dbReference type="HAMAP" id="MF_00948">
    <property type="entry name" value="NusG"/>
    <property type="match status" value="1"/>
</dbReference>
<dbReference type="InterPro" id="IPR005824">
    <property type="entry name" value="KOW"/>
</dbReference>
<dbReference type="InterPro" id="IPR047050">
    <property type="entry name" value="NGN"/>
</dbReference>
<dbReference type="InterPro" id="IPR006645">
    <property type="entry name" value="NGN-like_dom"/>
</dbReference>
<dbReference type="InterPro" id="IPR036735">
    <property type="entry name" value="NGN_dom_sf"/>
</dbReference>
<dbReference type="InterPro" id="IPR043425">
    <property type="entry name" value="NusG-like"/>
</dbReference>
<dbReference type="InterPro" id="IPR014722">
    <property type="entry name" value="Rib_uL2_dom2"/>
</dbReference>
<dbReference type="InterPro" id="IPR001062">
    <property type="entry name" value="Transcrpt_antiterm_NusG"/>
</dbReference>
<dbReference type="InterPro" id="IPR015869">
    <property type="entry name" value="Transcrpt_antiterm_NusG_bac_CS"/>
</dbReference>
<dbReference type="InterPro" id="IPR008991">
    <property type="entry name" value="Translation_prot_SH3-like_sf"/>
</dbReference>
<dbReference type="NCBIfam" id="TIGR00922">
    <property type="entry name" value="nusG"/>
    <property type="match status" value="1"/>
</dbReference>
<dbReference type="PANTHER" id="PTHR30265">
    <property type="entry name" value="RHO-INTERACTING TRANSCRIPTION TERMINATION FACTOR NUSG"/>
    <property type="match status" value="1"/>
</dbReference>
<dbReference type="PANTHER" id="PTHR30265:SF2">
    <property type="entry name" value="TRANSCRIPTION TERMINATION_ANTITERMINATION PROTEIN NUSG"/>
    <property type="match status" value="1"/>
</dbReference>
<dbReference type="Pfam" id="PF00467">
    <property type="entry name" value="KOW"/>
    <property type="match status" value="1"/>
</dbReference>
<dbReference type="Pfam" id="PF02357">
    <property type="entry name" value="NusG"/>
    <property type="match status" value="1"/>
</dbReference>
<dbReference type="PRINTS" id="PR00338">
    <property type="entry name" value="NUSGTNSCPFCT"/>
</dbReference>
<dbReference type="SMART" id="SM00739">
    <property type="entry name" value="KOW"/>
    <property type="match status" value="1"/>
</dbReference>
<dbReference type="SMART" id="SM00738">
    <property type="entry name" value="NGN"/>
    <property type="match status" value="1"/>
</dbReference>
<dbReference type="SUPFAM" id="SSF82679">
    <property type="entry name" value="N-utilization substance G protein NusG, N-terminal domain"/>
    <property type="match status" value="1"/>
</dbReference>
<dbReference type="SUPFAM" id="SSF50104">
    <property type="entry name" value="Translation proteins SH3-like domain"/>
    <property type="match status" value="1"/>
</dbReference>
<dbReference type="PROSITE" id="PS01014">
    <property type="entry name" value="NUSG"/>
    <property type="match status" value="1"/>
</dbReference>
<reference key="1">
    <citation type="journal article" date="1995" name="Science">
        <title>Whole-genome random sequencing and assembly of Haemophilus influenzae Rd.</title>
        <authorList>
            <person name="Fleischmann R.D."/>
            <person name="Adams M.D."/>
            <person name="White O."/>
            <person name="Clayton R.A."/>
            <person name="Kirkness E.F."/>
            <person name="Kerlavage A.R."/>
            <person name="Bult C.J."/>
            <person name="Tomb J.-F."/>
            <person name="Dougherty B.A."/>
            <person name="Merrick J.M."/>
            <person name="McKenney K."/>
            <person name="Sutton G.G."/>
            <person name="FitzHugh W."/>
            <person name="Fields C.A."/>
            <person name="Gocayne J.D."/>
            <person name="Scott J.D."/>
            <person name="Shirley R."/>
            <person name="Liu L.-I."/>
            <person name="Glodek A."/>
            <person name="Kelley J.M."/>
            <person name="Weidman J.F."/>
            <person name="Phillips C.A."/>
            <person name="Spriggs T."/>
            <person name="Hedblom E."/>
            <person name="Cotton M.D."/>
            <person name="Utterback T.R."/>
            <person name="Hanna M.C."/>
            <person name="Nguyen D.T."/>
            <person name="Saudek D.M."/>
            <person name="Brandon R.C."/>
            <person name="Fine L.D."/>
            <person name="Fritchman J.L."/>
            <person name="Fuhrmann J.L."/>
            <person name="Geoghagen N.S.M."/>
            <person name="Gnehm C.L."/>
            <person name="McDonald L.A."/>
            <person name="Small K.V."/>
            <person name="Fraser C.M."/>
            <person name="Smith H.O."/>
            <person name="Venter J.C."/>
        </authorList>
    </citation>
    <scope>NUCLEOTIDE SEQUENCE [LARGE SCALE GENOMIC DNA]</scope>
    <source>
        <strain>ATCC 51907 / DSM 11121 / KW20 / Rd</strain>
    </source>
</reference>
<gene>
    <name evidence="1" type="primary">nusG</name>
    <name type="ordered locus">HI_0717</name>
</gene>
<evidence type="ECO:0000255" key="1">
    <source>
        <dbReference type="HAMAP-Rule" id="MF_00948"/>
    </source>
</evidence>